<gene>
    <name evidence="1" type="primary">rplQ</name>
    <name type="ordered locus">H16_A3457</name>
</gene>
<organism>
    <name type="scientific">Cupriavidus necator (strain ATCC 17699 / DSM 428 / KCTC 22496 / NCIMB 10442 / H16 / Stanier 337)</name>
    <name type="common">Ralstonia eutropha</name>
    <dbReference type="NCBI Taxonomy" id="381666"/>
    <lineage>
        <taxon>Bacteria</taxon>
        <taxon>Pseudomonadati</taxon>
        <taxon>Pseudomonadota</taxon>
        <taxon>Betaproteobacteria</taxon>
        <taxon>Burkholderiales</taxon>
        <taxon>Burkholderiaceae</taxon>
        <taxon>Cupriavidus</taxon>
    </lineage>
</organism>
<sequence>MRHRHGLRKLNRTSSHRLAMLRNMSNSLFQHELIKTTVPKAKELRKVVEPLITLAKKDTVANRRLAFARLRDRDMVTKLFTELGPRYATRPGGYTRILKFGFRQGDNAPMALVELVDRPEITEAPAEEAAE</sequence>
<proteinExistence type="inferred from homology"/>
<comment type="subunit">
    <text evidence="1">Part of the 50S ribosomal subunit. Contacts protein L32.</text>
</comment>
<comment type="similarity">
    <text evidence="1">Belongs to the bacterial ribosomal protein bL17 family.</text>
</comment>
<reference key="1">
    <citation type="journal article" date="2006" name="Nat. Biotechnol.">
        <title>Genome sequence of the bioplastic-producing 'Knallgas' bacterium Ralstonia eutropha H16.</title>
        <authorList>
            <person name="Pohlmann A."/>
            <person name="Fricke W.F."/>
            <person name="Reinecke F."/>
            <person name="Kusian B."/>
            <person name="Liesegang H."/>
            <person name="Cramm R."/>
            <person name="Eitinger T."/>
            <person name="Ewering C."/>
            <person name="Poetter M."/>
            <person name="Schwartz E."/>
            <person name="Strittmatter A."/>
            <person name="Voss I."/>
            <person name="Gottschalk G."/>
            <person name="Steinbuechel A."/>
            <person name="Friedrich B."/>
            <person name="Bowien B."/>
        </authorList>
    </citation>
    <scope>NUCLEOTIDE SEQUENCE [LARGE SCALE GENOMIC DNA]</scope>
    <source>
        <strain>ATCC 17699 / DSM 428 / KCTC 22496 / NCIMB 10442 / H16 / Stanier 337</strain>
    </source>
</reference>
<accession>Q0K646</accession>
<feature type="chain" id="PRO_1000055925" description="Large ribosomal subunit protein bL17">
    <location>
        <begin position="1"/>
        <end position="131"/>
    </location>
</feature>
<name>RL17_CUPNH</name>
<evidence type="ECO:0000255" key="1">
    <source>
        <dbReference type="HAMAP-Rule" id="MF_01368"/>
    </source>
</evidence>
<evidence type="ECO:0000305" key="2"/>
<protein>
    <recommendedName>
        <fullName evidence="1">Large ribosomal subunit protein bL17</fullName>
    </recommendedName>
    <alternativeName>
        <fullName evidence="2">50S ribosomal protein L17</fullName>
    </alternativeName>
</protein>
<keyword id="KW-1185">Reference proteome</keyword>
<keyword id="KW-0687">Ribonucleoprotein</keyword>
<keyword id="KW-0689">Ribosomal protein</keyword>
<dbReference type="EMBL" id="AM260479">
    <property type="protein sequence ID" value="CAJ94525.1"/>
    <property type="molecule type" value="Genomic_DNA"/>
</dbReference>
<dbReference type="RefSeq" id="WP_010812373.1">
    <property type="nucleotide sequence ID" value="NZ_CP039287.1"/>
</dbReference>
<dbReference type="SMR" id="Q0K646"/>
<dbReference type="STRING" id="381666.H16_A3457"/>
<dbReference type="GeneID" id="34310227"/>
<dbReference type="KEGG" id="reh:H16_A3457"/>
<dbReference type="eggNOG" id="COG0203">
    <property type="taxonomic scope" value="Bacteria"/>
</dbReference>
<dbReference type="HOGENOM" id="CLU_074407_2_0_4"/>
<dbReference type="OrthoDB" id="9809073at2"/>
<dbReference type="Proteomes" id="UP000008210">
    <property type="component" value="Chromosome 1"/>
</dbReference>
<dbReference type="GO" id="GO:0022625">
    <property type="term" value="C:cytosolic large ribosomal subunit"/>
    <property type="evidence" value="ECO:0007669"/>
    <property type="project" value="TreeGrafter"/>
</dbReference>
<dbReference type="GO" id="GO:0003735">
    <property type="term" value="F:structural constituent of ribosome"/>
    <property type="evidence" value="ECO:0007669"/>
    <property type="project" value="InterPro"/>
</dbReference>
<dbReference type="GO" id="GO:0006412">
    <property type="term" value="P:translation"/>
    <property type="evidence" value="ECO:0007669"/>
    <property type="project" value="UniProtKB-UniRule"/>
</dbReference>
<dbReference type="FunFam" id="3.90.1030.10:FF:000001">
    <property type="entry name" value="50S ribosomal protein L17"/>
    <property type="match status" value="1"/>
</dbReference>
<dbReference type="Gene3D" id="3.90.1030.10">
    <property type="entry name" value="Ribosomal protein L17"/>
    <property type="match status" value="1"/>
</dbReference>
<dbReference type="HAMAP" id="MF_01368">
    <property type="entry name" value="Ribosomal_bL17"/>
    <property type="match status" value="1"/>
</dbReference>
<dbReference type="InterPro" id="IPR000456">
    <property type="entry name" value="Ribosomal_bL17"/>
</dbReference>
<dbReference type="InterPro" id="IPR047859">
    <property type="entry name" value="Ribosomal_bL17_CS"/>
</dbReference>
<dbReference type="InterPro" id="IPR036373">
    <property type="entry name" value="Ribosomal_bL17_sf"/>
</dbReference>
<dbReference type="NCBIfam" id="TIGR00059">
    <property type="entry name" value="L17"/>
    <property type="match status" value="1"/>
</dbReference>
<dbReference type="PANTHER" id="PTHR14413:SF16">
    <property type="entry name" value="LARGE RIBOSOMAL SUBUNIT PROTEIN BL17M"/>
    <property type="match status" value="1"/>
</dbReference>
<dbReference type="PANTHER" id="PTHR14413">
    <property type="entry name" value="RIBOSOMAL PROTEIN L17"/>
    <property type="match status" value="1"/>
</dbReference>
<dbReference type="Pfam" id="PF01196">
    <property type="entry name" value="Ribosomal_L17"/>
    <property type="match status" value="1"/>
</dbReference>
<dbReference type="SUPFAM" id="SSF64263">
    <property type="entry name" value="Prokaryotic ribosomal protein L17"/>
    <property type="match status" value="1"/>
</dbReference>
<dbReference type="PROSITE" id="PS01167">
    <property type="entry name" value="RIBOSOMAL_L17"/>
    <property type="match status" value="1"/>
</dbReference>